<evidence type="ECO:0000255" key="1">
    <source>
        <dbReference type="HAMAP-Rule" id="MF_01395"/>
    </source>
</evidence>
<evidence type="ECO:0000255" key="2">
    <source>
        <dbReference type="PROSITE-ProRule" id="PRU01136"/>
    </source>
</evidence>
<comment type="function">
    <text evidence="1">Component of the acetyl coenzyme A carboxylase (ACC) complex. Biotin carboxylase (BC) catalyzes the carboxylation of biotin on its carrier protein (BCCP) and then the CO(2) group is transferred by the transcarboxylase to acetyl-CoA to form malonyl-CoA.</text>
</comment>
<comment type="catalytic activity">
    <reaction evidence="1">
        <text>N(6)-carboxybiotinyl-L-lysyl-[protein] + acetyl-CoA = N(6)-biotinyl-L-lysyl-[protein] + malonyl-CoA</text>
        <dbReference type="Rhea" id="RHEA:54728"/>
        <dbReference type="Rhea" id="RHEA-COMP:10505"/>
        <dbReference type="Rhea" id="RHEA-COMP:10506"/>
        <dbReference type="ChEBI" id="CHEBI:57288"/>
        <dbReference type="ChEBI" id="CHEBI:57384"/>
        <dbReference type="ChEBI" id="CHEBI:83144"/>
        <dbReference type="ChEBI" id="CHEBI:83145"/>
        <dbReference type="EC" id="2.1.3.15"/>
    </reaction>
</comment>
<comment type="cofactor">
    <cofactor evidence="1">
        <name>Zn(2+)</name>
        <dbReference type="ChEBI" id="CHEBI:29105"/>
    </cofactor>
    <text evidence="1">Binds 1 zinc ion per subunit.</text>
</comment>
<comment type="pathway">
    <text evidence="1">Lipid metabolism; malonyl-CoA biosynthesis; malonyl-CoA from acetyl-CoA: step 1/1.</text>
</comment>
<comment type="subunit">
    <text evidence="1">Acetyl-CoA carboxylase is a heterohexamer composed of biotin carboxyl carrier protein (AccB), biotin carboxylase (AccC) and two subunits each of ACCase subunit alpha (AccA) and ACCase subunit beta (AccD).</text>
</comment>
<comment type="subcellular location">
    <subcellularLocation>
        <location evidence="1">Cytoplasm</location>
    </subcellularLocation>
</comment>
<comment type="similarity">
    <text evidence="1">Belongs to the AccD/PCCB family.</text>
</comment>
<keyword id="KW-0067">ATP-binding</keyword>
<keyword id="KW-0963">Cytoplasm</keyword>
<keyword id="KW-0275">Fatty acid biosynthesis</keyword>
<keyword id="KW-0276">Fatty acid metabolism</keyword>
<keyword id="KW-0444">Lipid biosynthesis</keyword>
<keyword id="KW-0443">Lipid metabolism</keyword>
<keyword id="KW-0479">Metal-binding</keyword>
<keyword id="KW-0547">Nucleotide-binding</keyword>
<keyword id="KW-1185">Reference proteome</keyword>
<keyword id="KW-0808">Transferase</keyword>
<keyword id="KW-0862">Zinc</keyword>
<keyword id="KW-0863">Zinc-finger</keyword>
<gene>
    <name evidence="1" type="primary">accD</name>
    <name type="ordered locus">Daud_1053</name>
</gene>
<name>ACCD_DESAP</name>
<accession>B1I3G7</accession>
<dbReference type="EC" id="2.1.3.15" evidence="1"/>
<dbReference type="EMBL" id="CP000860">
    <property type="protein sequence ID" value="ACA59565.1"/>
    <property type="molecule type" value="Genomic_DNA"/>
</dbReference>
<dbReference type="RefSeq" id="WP_012302151.1">
    <property type="nucleotide sequence ID" value="NC_010424.1"/>
</dbReference>
<dbReference type="SMR" id="B1I3G7"/>
<dbReference type="STRING" id="477974.Daud_1053"/>
<dbReference type="KEGG" id="dau:Daud_1053"/>
<dbReference type="eggNOG" id="COG0777">
    <property type="taxonomic scope" value="Bacteria"/>
</dbReference>
<dbReference type="HOGENOM" id="CLU_015486_1_1_9"/>
<dbReference type="OrthoDB" id="9772975at2"/>
<dbReference type="UniPathway" id="UPA00655">
    <property type="reaction ID" value="UER00711"/>
</dbReference>
<dbReference type="Proteomes" id="UP000008544">
    <property type="component" value="Chromosome"/>
</dbReference>
<dbReference type="GO" id="GO:0009317">
    <property type="term" value="C:acetyl-CoA carboxylase complex"/>
    <property type="evidence" value="ECO:0007669"/>
    <property type="project" value="InterPro"/>
</dbReference>
<dbReference type="GO" id="GO:0003989">
    <property type="term" value="F:acetyl-CoA carboxylase activity"/>
    <property type="evidence" value="ECO:0007669"/>
    <property type="project" value="InterPro"/>
</dbReference>
<dbReference type="GO" id="GO:0005524">
    <property type="term" value="F:ATP binding"/>
    <property type="evidence" value="ECO:0007669"/>
    <property type="project" value="UniProtKB-KW"/>
</dbReference>
<dbReference type="GO" id="GO:0016743">
    <property type="term" value="F:carboxyl- or carbamoyltransferase activity"/>
    <property type="evidence" value="ECO:0007669"/>
    <property type="project" value="UniProtKB-UniRule"/>
</dbReference>
<dbReference type="GO" id="GO:0008270">
    <property type="term" value="F:zinc ion binding"/>
    <property type="evidence" value="ECO:0007669"/>
    <property type="project" value="UniProtKB-UniRule"/>
</dbReference>
<dbReference type="GO" id="GO:0006633">
    <property type="term" value="P:fatty acid biosynthetic process"/>
    <property type="evidence" value="ECO:0007669"/>
    <property type="project" value="UniProtKB-KW"/>
</dbReference>
<dbReference type="GO" id="GO:2001295">
    <property type="term" value="P:malonyl-CoA biosynthetic process"/>
    <property type="evidence" value="ECO:0007669"/>
    <property type="project" value="UniProtKB-UniRule"/>
</dbReference>
<dbReference type="Gene3D" id="3.90.226.10">
    <property type="entry name" value="2-enoyl-CoA Hydratase, Chain A, domain 1"/>
    <property type="match status" value="1"/>
</dbReference>
<dbReference type="HAMAP" id="MF_01395">
    <property type="entry name" value="AcetylCoA_CT_beta"/>
    <property type="match status" value="1"/>
</dbReference>
<dbReference type="InterPro" id="IPR034733">
    <property type="entry name" value="AcCoA_carboxyl_beta"/>
</dbReference>
<dbReference type="InterPro" id="IPR000438">
    <property type="entry name" value="Acetyl_CoA_COase_Trfase_b_su"/>
</dbReference>
<dbReference type="InterPro" id="IPR029045">
    <property type="entry name" value="ClpP/crotonase-like_dom_sf"/>
</dbReference>
<dbReference type="InterPro" id="IPR011762">
    <property type="entry name" value="COA_CT_N"/>
</dbReference>
<dbReference type="InterPro" id="IPR041010">
    <property type="entry name" value="Znf-ACC"/>
</dbReference>
<dbReference type="NCBIfam" id="TIGR00515">
    <property type="entry name" value="accD"/>
    <property type="match status" value="1"/>
</dbReference>
<dbReference type="PANTHER" id="PTHR42995">
    <property type="entry name" value="ACETYL-COENZYME A CARBOXYLASE CARBOXYL TRANSFERASE SUBUNIT BETA, CHLOROPLASTIC"/>
    <property type="match status" value="1"/>
</dbReference>
<dbReference type="PANTHER" id="PTHR42995:SF5">
    <property type="entry name" value="ACETYL-COENZYME A CARBOXYLASE CARBOXYL TRANSFERASE SUBUNIT BETA, CHLOROPLASTIC"/>
    <property type="match status" value="1"/>
</dbReference>
<dbReference type="Pfam" id="PF01039">
    <property type="entry name" value="Carboxyl_trans"/>
    <property type="match status" value="1"/>
</dbReference>
<dbReference type="Pfam" id="PF17848">
    <property type="entry name" value="Zn_ribbon_ACC"/>
    <property type="match status" value="1"/>
</dbReference>
<dbReference type="PRINTS" id="PR01070">
    <property type="entry name" value="ACCCTRFRASEB"/>
</dbReference>
<dbReference type="SUPFAM" id="SSF52096">
    <property type="entry name" value="ClpP/crotonase"/>
    <property type="match status" value="1"/>
</dbReference>
<dbReference type="PROSITE" id="PS50980">
    <property type="entry name" value="COA_CT_NTER"/>
    <property type="match status" value="1"/>
</dbReference>
<protein>
    <recommendedName>
        <fullName evidence="1">Acetyl-coenzyme A carboxylase carboxyl transferase subunit beta</fullName>
        <shortName evidence="1">ACCase subunit beta</shortName>
        <shortName evidence="1">Acetyl-CoA carboxylase carboxyltransferase subunit beta</shortName>
        <ecNumber evidence="1">2.1.3.15</ecNumber>
    </recommendedName>
</protein>
<organism>
    <name type="scientific">Desulforudis audaxviator (strain MP104C)</name>
    <dbReference type="NCBI Taxonomy" id="477974"/>
    <lineage>
        <taxon>Bacteria</taxon>
        <taxon>Bacillati</taxon>
        <taxon>Bacillota</taxon>
        <taxon>Clostridia</taxon>
        <taxon>Thermoanaerobacterales</taxon>
        <taxon>Candidatus Desulforudaceae</taxon>
        <taxon>Candidatus Desulforudis</taxon>
    </lineage>
</organism>
<sequence>MFKKSKYFTVRPETKREIPEGLWIKCQCGAILFAKDLERNLKVCQKCAHHFRLTARERIRITLDTEDFEELDAGLAPRDLLGFPGYAERLAANQKQTGLNEAAISAEGTIGGHRVVLVVMDSHFIMGSMGTVVGEKVARAAEHAVRNRLPLIVFSASGGARMQEGILSLMQMAKTAAAIGRLDSAGLLYVSVLTDPTMGGVSASFAFLGDIILAEPGALIGFAGPRVIEQTIRQKLPDGFQQAEFLQEHGFVDAVVPRSRLKDTLIKIIGMHQAG</sequence>
<feature type="chain" id="PRO_0000389733" description="Acetyl-coenzyme A carboxylase carboxyl transferase subunit beta">
    <location>
        <begin position="1"/>
        <end position="275"/>
    </location>
</feature>
<feature type="domain" description="CoA carboxyltransferase N-terminal" evidence="2">
    <location>
        <begin position="21"/>
        <end position="275"/>
    </location>
</feature>
<feature type="zinc finger region" description="C4-type" evidence="1">
    <location>
        <begin position="26"/>
        <end position="47"/>
    </location>
</feature>
<feature type="binding site" evidence="1">
    <location>
        <position position="26"/>
    </location>
    <ligand>
        <name>Zn(2+)</name>
        <dbReference type="ChEBI" id="CHEBI:29105"/>
    </ligand>
</feature>
<feature type="binding site" evidence="1">
    <location>
        <position position="28"/>
    </location>
    <ligand>
        <name>Zn(2+)</name>
        <dbReference type="ChEBI" id="CHEBI:29105"/>
    </ligand>
</feature>
<feature type="binding site" evidence="1">
    <location>
        <position position="44"/>
    </location>
    <ligand>
        <name>Zn(2+)</name>
        <dbReference type="ChEBI" id="CHEBI:29105"/>
    </ligand>
</feature>
<feature type="binding site" evidence="1">
    <location>
        <position position="47"/>
    </location>
    <ligand>
        <name>Zn(2+)</name>
        <dbReference type="ChEBI" id="CHEBI:29105"/>
    </ligand>
</feature>
<reference key="1">
    <citation type="submission" date="2007-10" db="EMBL/GenBank/DDBJ databases">
        <title>Complete sequence of chromosome of Desulforudis audaxviator MP104C.</title>
        <authorList>
            <person name="Copeland A."/>
            <person name="Lucas S."/>
            <person name="Lapidus A."/>
            <person name="Barry K."/>
            <person name="Glavina del Rio T."/>
            <person name="Dalin E."/>
            <person name="Tice H."/>
            <person name="Bruce D."/>
            <person name="Pitluck S."/>
            <person name="Lowry S.R."/>
            <person name="Larimer F."/>
            <person name="Land M.L."/>
            <person name="Hauser L."/>
            <person name="Kyrpides N."/>
            <person name="Ivanova N.N."/>
            <person name="Richardson P."/>
        </authorList>
    </citation>
    <scope>NUCLEOTIDE SEQUENCE [LARGE SCALE GENOMIC DNA]</scope>
    <source>
        <strain>MP104C</strain>
    </source>
</reference>
<proteinExistence type="inferred from homology"/>